<sequence>MSNITINKILARQILDSRGYPTIEAEVILSNNTKAKACVPSGASVGKFEAVELRDNDKNYYNGYGVTKAVNIINSEIAPQIIGMNTLNQEKIDNTLIKIDGTDNKSRIGANSTLAVSLAIAKAAASTLNIPLYQYIGGINAKVLPTPLINVINGGMHADNNLDFQEFMIIPNGANKFEDAMRMSAEVFFKLKQILKSKQYNTSVGDEGGFAPNIKTNNEVFEIIIDAIEKSGYKMYKDFSLGLDVAASTFYKDQKYKFADYEFNTQELVEYYKNITSQYPIISLEDPIAEEDTNGWKLITQELGNKIQIVGDDLFVTNCKLIQNGIQNNLANAVLIKPNQIGTLTETFNAIRLAQKNNYNTIISHRSGETEDTTISHIAVAANCGQIKTGSLSRSERLAKYNELLYIEKQLDISAIYYGAL</sequence>
<feature type="chain" id="PRO_0000267029" description="Enolase">
    <location>
        <begin position="1"/>
        <end position="421"/>
    </location>
</feature>
<feature type="active site" description="Proton donor" evidence="1">
    <location>
        <position position="207"/>
    </location>
</feature>
<feature type="active site" description="Proton acceptor" evidence="1">
    <location>
        <position position="337"/>
    </location>
</feature>
<feature type="binding site" evidence="1">
    <location>
        <position position="165"/>
    </location>
    <ligand>
        <name>(2R)-2-phosphoglycerate</name>
        <dbReference type="ChEBI" id="CHEBI:58289"/>
    </ligand>
</feature>
<feature type="binding site" evidence="1">
    <location>
        <position position="244"/>
    </location>
    <ligand>
        <name>Mg(2+)</name>
        <dbReference type="ChEBI" id="CHEBI:18420"/>
    </ligand>
</feature>
<feature type="binding site" evidence="1">
    <location>
        <position position="285"/>
    </location>
    <ligand>
        <name>Mg(2+)</name>
        <dbReference type="ChEBI" id="CHEBI:18420"/>
    </ligand>
</feature>
<feature type="binding site" evidence="1">
    <location>
        <position position="312"/>
    </location>
    <ligand>
        <name>Mg(2+)</name>
        <dbReference type="ChEBI" id="CHEBI:18420"/>
    </ligand>
</feature>
<feature type="binding site" evidence="1">
    <location>
        <position position="337"/>
    </location>
    <ligand>
        <name>(2R)-2-phosphoglycerate</name>
        <dbReference type="ChEBI" id="CHEBI:58289"/>
    </ligand>
</feature>
<feature type="binding site" evidence="1">
    <location>
        <position position="366"/>
    </location>
    <ligand>
        <name>(2R)-2-phosphoglycerate</name>
        <dbReference type="ChEBI" id="CHEBI:58289"/>
    </ligand>
</feature>
<feature type="binding site" evidence="1">
    <location>
        <position position="367"/>
    </location>
    <ligand>
        <name>(2R)-2-phosphoglycerate</name>
        <dbReference type="ChEBI" id="CHEBI:58289"/>
    </ligand>
</feature>
<feature type="binding site" evidence="1">
    <location>
        <position position="388"/>
    </location>
    <ligand>
        <name>(2R)-2-phosphoglycerate</name>
        <dbReference type="ChEBI" id="CHEBI:58289"/>
    </ligand>
</feature>
<accession>Q3YRX9</accession>
<protein>
    <recommendedName>
        <fullName evidence="1">Enolase</fullName>
        <ecNumber evidence="1">4.2.1.11</ecNumber>
    </recommendedName>
    <alternativeName>
        <fullName evidence="1">2-phospho-D-glycerate hydro-lyase</fullName>
    </alternativeName>
    <alternativeName>
        <fullName evidence="1">2-phosphoglycerate dehydratase</fullName>
    </alternativeName>
</protein>
<evidence type="ECO:0000255" key="1">
    <source>
        <dbReference type="HAMAP-Rule" id="MF_00318"/>
    </source>
</evidence>
<reference key="1">
    <citation type="journal article" date="2006" name="J. Bacteriol.">
        <title>The genome of the obligately intracellular bacterium Ehrlichia canis reveals themes of complex membrane structure and immune evasion strategies.</title>
        <authorList>
            <person name="Mavromatis K."/>
            <person name="Doyle C.K."/>
            <person name="Lykidis A."/>
            <person name="Ivanova N."/>
            <person name="Francino M.P."/>
            <person name="Chain P."/>
            <person name="Shin M."/>
            <person name="Malfatti S."/>
            <person name="Larimer F."/>
            <person name="Copeland A."/>
            <person name="Detter J.C."/>
            <person name="Land M."/>
            <person name="Richardson P.M."/>
            <person name="Yu X.J."/>
            <person name="Walker D.H."/>
            <person name="McBride J.W."/>
            <person name="Kyrpides N.C."/>
        </authorList>
    </citation>
    <scope>NUCLEOTIDE SEQUENCE [LARGE SCALE GENOMIC DNA]</scope>
    <source>
        <strain>Jake</strain>
    </source>
</reference>
<organism>
    <name type="scientific">Ehrlichia canis (strain Jake)</name>
    <dbReference type="NCBI Taxonomy" id="269484"/>
    <lineage>
        <taxon>Bacteria</taxon>
        <taxon>Pseudomonadati</taxon>
        <taxon>Pseudomonadota</taxon>
        <taxon>Alphaproteobacteria</taxon>
        <taxon>Rickettsiales</taxon>
        <taxon>Anaplasmataceae</taxon>
        <taxon>Ehrlichia</taxon>
    </lineage>
</organism>
<proteinExistence type="inferred from homology"/>
<gene>
    <name evidence="1" type="primary">eno</name>
    <name type="ordered locus">Ecaj_0489</name>
</gene>
<keyword id="KW-0963">Cytoplasm</keyword>
<keyword id="KW-0324">Glycolysis</keyword>
<keyword id="KW-0456">Lyase</keyword>
<keyword id="KW-0460">Magnesium</keyword>
<keyword id="KW-0479">Metal-binding</keyword>
<keyword id="KW-0964">Secreted</keyword>
<dbReference type="EC" id="4.2.1.11" evidence="1"/>
<dbReference type="EMBL" id="CP000107">
    <property type="protein sequence ID" value="AAZ68526.1"/>
    <property type="molecule type" value="Genomic_DNA"/>
</dbReference>
<dbReference type="RefSeq" id="WP_011304604.1">
    <property type="nucleotide sequence ID" value="NC_007354.1"/>
</dbReference>
<dbReference type="SMR" id="Q3YRX9"/>
<dbReference type="FunCoup" id="Q3YRX9">
    <property type="interactions" value="283"/>
</dbReference>
<dbReference type="STRING" id="269484.Ecaj_0489"/>
<dbReference type="KEGG" id="ecn:Ecaj_0489"/>
<dbReference type="eggNOG" id="COG0148">
    <property type="taxonomic scope" value="Bacteria"/>
</dbReference>
<dbReference type="HOGENOM" id="CLU_031223_2_1_5"/>
<dbReference type="InParanoid" id="Q3YRX9"/>
<dbReference type="UniPathway" id="UPA00109">
    <property type="reaction ID" value="UER00187"/>
</dbReference>
<dbReference type="Proteomes" id="UP000000435">
    <property type="component" value="Chromosome"/>
</dbReference>
<dbReference type="GO" id="GO:0009986">
    <property type="term" value="C:cell surface"/>
    <property type="evidence" value="ECO:0007669"/>
    <property type="project" value="UniProtKB-SubCell"/>
</dbReference>
<dbReference type="GO" id="GO:0005576">
    <property type="term" value="C:extracellular region"/>
    <property type="evidence" value="ECO:0007669"/>
    <property type="project" value="UniProtKB-SubCell"/>
</dbReference>
<dbReference type="GO" id="GO:0000015">
    <property type="term" value="C:phosphopyruvate hydratase complex"/>
    <property type="evidence" value="ECO:0007669"/>
    <property type="project" value="InterPro"/>
</dbReference>
<dbReference type="GO" id="GO:0000287">
    <property type="term" value="F:magnesium ion binding"/>
    <property type="evidence" value="ECO:0007669"/>
    <property type="project" value="UniProtKB-UniRule"/>
</dbReference>
<dbReference type="GO" id="GO:0004634">
    <property type="term" value="F:phosphopyruvate hydratase activity"/>
    <property type="evidence" value="ECO:0007669"/>
    <property type="project" value="UniProtKB-UniRule"/>
</dbReference>
<dbReference type="GO" id="GO:0006096">
    <property type="term" value="P:glycolytic process"/>
    <property type="evidence" value="ECO:0007669"/>
    <property type="project" value="UniProtKB-UniRule"/>
</dbReference>
<dbReference type="CDD" id="cd03313">
    <property type="entry name" value="enolase"/>
    <property type="match status" value="1"/>
</dbReference>
<dbReference type="Gene3D" id="3.20.20.120">
    <property type="entry name" value="Enolase-like C-terminal domain"/>
    <property type="match status" value="1"/>
</dbReference>
<dbReference type="Gene3D" id="3.30.390.10">
    <property type="entry name" value="Enolase-like, N-terminal domain"/>
    <property type="match status" value="1"/>
</dbReference>
<dbReference type="HAMAP" id="MF_00318">
    <property type="entry name" value="Enolase"/>
    <property type="match status" value="1"/>
</dbReference>
<dbReference type="InterPro" id="IPR000941">
    <property type="entry name" value="Enolase"/>
</dbReference>
<dbReference type="InterPro" id="IPR036849">
    <property type="entry name" value="Enolase-like_C_sf"/>
</dbReference>
<dbReference type="InterPro" id="IPR029017">
    <property type="entry name" value="Enolase-like_N"/>
</dbReference>
<dbReference type="InterPro" id="IPR020810">
    <property type="entry name" value="Enolase_C"/>
</dbReference>
<dbReference type="InterPro" id="IPR020809">
    <property type="entry name" value="Enolase_CS"/>
</dbReference>
<dbReference type="InterPro" id="IPR020811">
    <property type="entry name" value="Enolase_N"/>
</dbReference>
<dbReference type="NCBIfam" id="TIGR01060">
    <property type="entry name" value="eno"/>
    <property type="match status" value="1"/>
</dbReference>
<dbReference type="PANTHER" id="PTHR11902">
    <property type="entry name" value="ENOLASE"/>
    <property type="match status" value="1"/>
</dbReference>
<dbReference type="PANTHER" id="PTHR11902:SF1">
    <property type="entry name" value="ENOLASE"/>
    <property type="match status" value="1"/>
</dbReference>
<dbReference type="Pfam" id="PF00113">
    <property type="entry name" value="Enolase_C"/>
    <property type="match status" value="1"/>
</dbReference>
<dbReference type="Pfam" id="PF03952">
    <property type="entry name" value="Enolase_N"/>
    <property type="match status" value="1"/>
</dbReference>
<dbReference type="PIRSF" id="PIRSF001400">
    <property type="entry name" value="Enolase"/>
    <property type="match status" value="1"/>
</dbReference>
<dbReference type="PRINTS" id="PR00148">
    <property type="entry name" value="ENOLASE"/>
</dbReference>
<dbReference type="SFLD" id="SFLDF00002">
    <property type="entry name" value="enolase"/>
    <property type="match status" value="1"/>
</dbReference>
<dbReference type="SFLD" id="SFLDG00178">
    <property type="entry name" value="enolase"/>
    <property type="match status" value="1"/>
</dbReference>
<dbReference type="SMART" id="SM01192">
    <property type="entry name" value="Enolase_C"/>
    <property type="match status" value="1"/>
</dbReference>
<dbReference type="SMART" id="SM01193">
    <property type="entry name" value="Enolase_N"/>
    <property type="match status" value="1"/>
</dbReference>
<dbReference type="SUPFAM" id="SSF51604">
    <property type="entry name" value="Enolase C-terminal domain-like"/>
    <property type="match status" value="1"/>
</dbReference>
<dbReference type="SUPFAM" id="SSF54826">
    <property type="entry name" value="Enolase N-terminal domain-like"/>
    <property type="match status" value="1"/>
</dbReference>
<dbReference type="PROSITE" id="PS00164">
    <property type="entry name" value="ENOLASE"/>
    <property type="match status" value="1"/>
</dbReference>
<name>ENO_EHRCJ</name>
<comment type="function">
    <text evidence="1">Catalyzes the reversible conversion of 2-phosphoglycerate (2-PG) into phosphoenolpyruvate (PEP). It is essential for the degradation of carbohydrates via glycolysis.</text>
</comment>
<comment type="catalytic activity">
    <reaction evidence="1">
        <text>(2R)-2-phosphoglycerate = phosphoenolpyruvate + H2O</text>
        <dbReference type="Rhea" id="RHEA:10164"/>
        <dbReference type="ChEBI" id="CHEBI:15377"/>
        <dbReference type="ChEBI" id="CHEBI:58289"/>
        <dbReference type="ChEBI" id="CHEBI:58702"/>
        <dbReference type="EC" id="4.2.1.11"/>
    </reaction>
</comment>
<comment type="cofactor">
    <cofactor evidence="1">
        <name>Mg(2+)</name>
        <dbReference type="ChEBI" id="CHEBI:18420"/>
    </cofactor>
    <text evidence="1">Binds a second Mg(2+) ion via substrate during catalysis.</text>
</comment>
<comment type="pathway">
    <text evidence="1">Carbohydrate degradation; glycolysis; pyruvate from D-glyceraldehyde 3-phosphate: step 4/5.</text>
</comment>
<comment type="subcellular location">
    <subcellularLocation>
        <location evidence="1">Cytoplasm</location>
    </subcellularLocation>
    <subcellularLocation>
        <location evidence="1">Secreted</location>
    </subcellularLocation>
    <subcellularLocation>
        <location evidence="1">Cell surface</location>
    </subcellularLocation>
    <text evidence="1">Fractions of enolase are present in both the cytoplasm and on the cell surface.</text>
</comment>
<comment type="similarity">
    <text evidence="1">Belongs to the enolase family.</text>
</comment>